<keyword id="KW-1267">Proteomics identification</keyword>
<keyword id="KW-1185">Reference proteome</keyword>
<protein>
    <recommendedName>
        <fullName evidence="1">Uncharacterized protein C2orf15</fullName>
    </recommendedName>
</protein>
<accession>Q8WU43</accession>
<proteinExistence type="evidence at protein level"/>
<gene>
    <name evidence="2" type="primary">C2orf15</name>
</gene>
<comment type="interaction">
    <interactant intactId="EBI-12904676">
        <id>Q8WU43</id>
    </interactant>
    <interactant intactId="EBI-1646426">
        <id>Q15109</id>
        <label>AGER</label>
    </interactant>
    <organismsDiffer>false</organismsDiffer>
    <experiments>3</experiments>
</comment>
<comment type="interaction">
    <interactant intactId="EBI-12904676">
        <id>Q8WU43</id>
    </interactant>
    <interactant intactId="EBI-743027">
        <id>P51808</id>
        <label>DYNLT3</label>
    </interactant>
    <organismsDiffer>false</organismsDiffer>
    <experiments>3</experiments>
</comment>
<comment type="interaction">
    <interactant intactId="EBI-12904676">
        <id>Q8WU43</id>
    </interactant>
    <interactant intactId="EBI-1056902">
        <id>P15311</id>
        <label>EZR</label>
    </interactant>
    <organismsDiffer>false</organismsDiffer>
    <experiments>3</experiments>
</comment>
<comment type="interaction">
    <interactant intactId="EBI-12904676">
        <id>Q8WU43</id>
    </interactant>
    <interactant intactId="EBI-602382">
        <id>Q16512</id>
        <label>PKN1</label>
    </interactant>
    <organismsDiffer>false</organismsDiffer>
    <experiments>3</experiments>
</comment>
<comment type="interaction">
    <interactant intactId="EBI-12904676">
        <id>Q8WU43</id>
    </interactant>
    <interactant intactId="EBI-1052596">
        <id>P31930</id>
        <label>UQCRC1</label>
    </interactant>
    <organismsDiffer>false</organismsDiffer>
    <experiments>3</experiments>
</comment>
<comment type="sequence caution" evidence="1">
    <conflict type="erroneous initiation">
        <sequence resource="EMBL-CDS" id="AAH21264"/>
    </conflict>
    <text>Extended N-terminus.</text>
</comment>
<reference key="1">
    <citation type="journal article" date="2005" name="Nature">
        <title>Generation and annotation of the DNA sequences of human chromosomes 2 and 4.</title>
        <authorList>
            <person name="Hillier L.W."/>
            <person name="Graves T.A."/>
            <person name="Fulton R.S."/>
            <person name="Fulton L.A."/>
            <person name="Pepin K.H."/>
            <person name="Minx P."/>
            <person name="Wagner-McPherson C."/>
            <person name="Layman D."/>
            <person name="Wylie K."/>
            <person name="Sekhon M."/>
            <person name="Becker M.C."/>
            <person name="Fewell G.A."/>
            <person name="Delehaunty K.D."/>
            <person name="Miner T.L."/>
            <person name="Nash W.E."/>
            <person name="Kremitzki C."/>
            <person name="Oddy L."/>
            <person name="Du H."/>
            <person name="Sun H."/>
            <person name="Bradshaw-Cordum H."/>
            <person name="Ali J."/>
            <person name="Carter J."/>
            <person name="Cordes M."/>
            <person name="Harris A."/>
            <person name="Isak A."/>
            <person name="van Brunt A."/>
            <person name="Nguyen C."/>
            <person name="Du F."/>
            <person name="Courtney L."/>
            <person name="Kalicki J."/>
            <person name="Ozersky P."/>
            <person name="Abbott S."/>
            <person name="Armstrong J."/>
            <person name="Belter E.A."/>
            <person name="Caruso L."/>
            <person name="Cedroni M."/>
            <person name="Cotton M."/>
            <person name="Davidson T."/>
            <person name="Desai A."/>
            <person name="Elliott G."/>
            <person name="Erb T."/>
            <person name="Fronick C."/>
            <person name="Gaige T."/>
            <person name="Haakenson W."/>
            <person name="Haglund K."/>
            <person name="Holmes A."/>
            <person name="Harkins R."/>
            <person name="Kim K."/>
            <person name="Kruchowski S.S."/>
            <person name="Strong C.M."/>
            <person name="Grewal N."/>
            <person name="Goyea E."/>
            <person name="Hou S."/>
            <person name="Levy A."/>
            <person name="Martinka S."/>
            <person name="Mead K."/>
            <person name="McLellan M.D."/>
            <person name="Meyer R."/>
            <person name="Randall-Maher J."/>
            <person name="Tomlinson C."/>
            <person name="Dauphin-Kohlberg S."/>
            <person name="Kozlowicz-Reilly A."/>
            <person name="Shah N."/>
            <person name="Swearengen-Shahid S."/>
            <person name="Snider J."/>
            <person name="Strong J.T."/>
            <person name="Thompson J."/>
            <person name="Yoakum M."/>
            <person name="Leonard S."/>
            <person name="Pearman C."/>
            <person name="Trani L."/>
            <person name="Radionenko M."/>
            <person name="Waligorski J.E."/>
            <person name="Wang C."/>
            <person name="Rock S.M."/>
            <person name="Tin-Wollam A.-M."/>
            <person name="Maupin R."/>
            <person name="Latreille P."/>
            <person name="Wendl M.C."/>
            <person name="Yang S.-P."/>
            <person name="Pohl C."/>
            <person name="Wallis J.W."/>
            <person name="Spieth J."/>
            <person name="Bieri T.A."/>
            <person name="Berkowicz N."/>
            <person name="Nelson J.O."/>
            <person name="Osborne J."/>
            <person name="Ding L."/>
            <person name="Meyer R."/>
            <person name="Sabo A."/>
            <person name="Shotland Y."/>
            <person name="Sinha P."/>
            <person name="Wohldmann P.E."/>
            <person name="Cook L.L."/>
            <person name="Hickenbotham M.T."/>
            <person name="Eldred J."/>
            <person name="Williams D."/>
            <person name="Jones T.A."/>
            <person name="She X."/>
            <person name="Ciccarelli F.D."/>
            <person name="Izaurralde E."/>
            <person name="Taylor J."/>
            <person name="Schmutz J."/>
            <person name="Myers R.M."/>
            <person name="Cox D.R."/>
            <person name="Huang X."/>
            <person name="McPherson J.D."/>
            <person name="Mardis E.R."/>
            <person name="Clifton S.W."/>
            <person name="Warren W.C."/>
            <person name="Chinwalla A.T."/>
            <person name="Eddy S.R."/>
            <person name="Marra M.A."/>
            <person name="Ovcharenko I."/>
            <person name="Furey T.S."/>
            <person name="Miller W."/>
            <person name="Eichler E.E."/>
            <person name="Bork P."/>
            <person name="Suyama M."/>
            <person name="Torrents D."/>
            <person name="Waterston R.H."/>
            <person name="Wilson R.K."/>
        </authorList>
    </citation>
    <scope>NUCLEOTIDE SEQUENCE [LARGE SCALE GENOMIC DNA]</scope>
</reference>
<reference key="2">
    <citation type="journal article" date="2004" name="Genome Res.">
        <title>The status, quality, and expansion of the NIH full-length cDNA project: the Mammalian Gene Collection (MGC).</title>
        <authorList>
            <consortium name="The MGC Project Team"/>
        </authorList>
    </citation>
    <scope>NUCLEOTIDE SEQUENCE [LARGE SCALE MRNA]</scope>
    <source>
        <tissue>Placenta</tissue>
    </source>
</reference>
<evidence type="ECO:0000305" key="1"/>
<evidence type="ECO:0000312" key="2">
    <source>
        <dbReference type="HGNC" id="HGNC:28436"/>
    </source>
</evidence>
<organism>
    <name type="scientific">Homo sapiens</name>
    <name type="common">Human</name>
    <dbReference type="NCBI Taxonomy" id="9606"/>
    <lineage>
        <taxon>Eukaryota</taxon>
        <taxon>Metazoa</taxon>
        <taxon>Chordata</taxon>
        <taxon>Craniata</taxon>
        <taxon>Vertebrata</taxon>
        <taxon>Euteleostomi</taxon>
        <taxon>Mammalia</taxon>
        <taxon>Eutheria</taxon>
        <taxon>Euarchontoglires</taxon>
        <taxon>Primates</taxon>
        <taxon>Haplorrhini</taxon>
        <taxon>Catarrhini</taxon>
        <taxon>Hominidae</taxon>
        <taxon>Homo</taxon>
    </lineage>
</organism>
<dbReference type="EMBL" id="AC092587">
    <property type="protein sequence ID" value="AAX88926.1"/>
    <property type="molecule type" value="Genomic_DNA"/>
</dbReference>
<dbReference type="EMBL" id="BC021264">
    <property type="protein sequence ID" value="AAH21264.1"/>
    <property type="status" value="ALT_INIT"/>
    <property type="molecule type" value="mRNA"/>
</dbReference>
<dbReference type="CCDS" id="CCDS2038.2"/>
<dbReference type="RefSeq" id="NP_001304921.2">
    <property type="nucleotide sequence ID" value="NM_001317992.2"/>
</dbReference>
<dbReference type="RefSeq" id="NP_653307.2">
    <property type="nucleotide sequence ID" value="NM_144706.4"/>
</dbReference>
<dbReference type="BioGRID" id="127311">
    <property type="interactions" value="3"/>
</dbReference>
<dbReference type="IntAct" id="Q8WU43">
    <property type="interactions" value="5"/>
</dbReference>
<dbReference type="STRING" id="9606.ENSP00000497775"/>
<dbReference type="iPTMnet" id="Q8WU43"/>
<dbReference type="PhosphoSitePlus" id="Q8WU43"/>
<dbReference type="BioMuta" id="C2orf15"/>
<dbReference type="jPOST" id="Q8WU43"/>
<dbReference type="MassIVE" id="Q8WU43"/>
<dbReference type="PaxDb" id="9606-ENSP00000302202"/>
<dbReference type="PeptideAtlas" id="Q8WU43"/>
<dbReference type="ProteomicsDB" id="74631"/>
<dbReference type="Antibodypedia" id="71553">
    <property type="antibodies" value="30 antibodies from 7 providers"/>
</dbReference>
<dbReference type="DNASU" id="150590"/>
<dbReference type="Ensembl" id="ENST00000409684.2">
    <property type="protein sequence ID" value="ENSP00000386654.2"/>
    <property type="gene ID" value="ENSG00000273045.7"/>
</dbReference>
<dbReference type="Ensembl" id="ENST00000650052.2">
    <property type="protein sequence ID" value="ENSP00000497775.2"/>
    <property type="gene ID" value="ENSG00000273045.7"/>
</dbReference>
<dbReference type="GeneID" id="150590"/>
<dbReference type="KEGG" id="hsa:150590"/>
<dbReference type="MANE-Select" id="ENST00000650052.2">
    <property type="protein sequence ID" value="ENSP00000497775.2"/>
    <property type="RefSeq nucleotide sequence ID" value="NM_144706.4"/>
    <property type="RefSeq protein sequence ID" value="NP_653307.2"/>
</dbReference>
<dbReference type="UCSC" id="uc002szk.4">
    <property type="organism name" value="human"/>
</dbReference>
<dbReference type="AGR" id="HGNC:28436"/>
<dbReference type="CTD" id="150590"/>
<dbReference type="DisGeNET" id="150590"/>
<dbReference type="GeneCards" id="C2orf15"/>
<dbReference type="HGNC" id="HGNC:28436">
    <property type="gene designation" value="C2orf15"/>
</dbReference>
<dbReference type="HPA" id="ENSG00000273045">
    <property type="expression patterns" value="Low tissue specificity"/>
</dbReference>
<dbReference type="neXtProt" id="NX_Q8WU43"/>
<dbReference type="OpenTargets" id="ENSG00000273045"/>
<dbReference type="PharmGKB" id="PA134861678"/>
<dbReference type="VEuPathDB" id="HostDB:ENSG00000273045"/>
<dbReference type="eggNOG" id="ENOG502RWG5">
    <property type="taxonomic scope" value="Eukaryota"/>
</dbReference>
<dbReference type="GeneTree" id="ENSGT00390000000424"/>
<dbReference type="HOGENOM" id="CLU_2090328_0_0_1"/>
<dbReference type="InParanoid" id="Q8WU43"/>
<dbReference type="OMA" id="CSAVPMG"/>
<dbReference type="OrthoDB" id="9441888at2759"/>
<dbReference type="PAN-GO" id="Q8WU43">
    <property type="GO annotations" value="0 GO annotations based on evolutionary models"/>
</dbReference>
<dbReference type="PathwayCommons" id="Q8WU43"/>
<dbReference type="SignaLink" id="Q8WU43"/>
<dbReference type="BioGRID-ORCS" id="150590">
    <property type="hits" value="14 hits in 1124 CRISPR screens"/>
</dbReference>
<dbReference type="GenomeRNAi" id="150590"/>
<dbReference type="Pharos" id="Q8WU43">
    <property type="development level" value="Tdark"/>
</dbReference>
<dbReference type="PRO" id="PR:Q8WU43"/>
<dbReference type="Proteomes" id="UP000005640">
    <property type="component" value="Chromosome 2"/>
</dbReference>
<dbReference type="RNAct" id="Q8WU43">
    <property type="molecule type" value="protein"/>
</dbReference>
<dbReference type="Bgee" id="ENSG00000273045">
    <property type="expression patterns" value="Expressed in oocyte and 103 other cell types or tissues"/>
</dbReference>
<dbReference type="ExpressionAtlas" id="Q8WU43">
    <property type="expression patterns" value="baseline and differential"/>
</dbReference>
<dbReference type="GO" id="GO:0003723">
    <property type="term" value="F:RNA binding"/>
    <property type="evidence" value="ECO:0007005"/>
    <property type="project" value="UniProtKB"/>
</dbReference>
<dbReference type="InterPro" id="IPR041537">
    <property type="entry name" value="DUF5547"/>
</dbReference>
<dbReference type="Pfam" id="PF17701">
    <property type="entry name" value="DUF5547"/>
    <property type="match status" value="1"/>
</dbReference>
<sequence length="91" mass="9962">MGFSLSKSATQVSAIHMDSKVDDHLIRGTEKSRLEPATQLFQNTKKIRLEDTNQENFTRIEGTGTGSLSGKALGSVVYVKESDGLEMTDVE</sequence>
<feature type="chain" id="PRO_0000089345" description="Uncharacterized protein C2orf15">
    <location>
        <begin position="1"/>
        <end position="91"/>
    </location>
</feature>
<name>CB015_HUMAN</name>